<sequence length="771" mass="86366">MIKMWRLQIVLVPPSAQDIITFLEARLNTPQSVSPMVQYNEDIITHNNSINNCSDPSPTSPSSQNSIQSNRSSDFINYLPNCKKFLHFTDGDNTLLQLSNEILTKFDRLYPNFKESIEIVSLQDRHGCDLDSEFIIKDVFENDGVVLVILKDELDWSRNQHISLLQLARQRRRQDNKPSTKSIVTEKRKKISKEDLSSISNKDTMHLIAKSSLKNNFINKSRVSTPLMNEILPLASKYDALNKEKCPMPLTSTVVASNVHKDVKDHARAKEGVVTQGSDNNKENIPSSTQQQKNDGAKRAESKDLDLLRNSSEDADYEPADENSPQISFDSIDTDFQLSTTSHTNSDMHIQYSNPSSGAHSPRKSSLEIKVQNKKGDDLPLNDKDIGENCRRIEAFSDEEDFNETDNDRADSFINNSKKASMGFRDINSDLDSVSFNSDIENAVQSTQSTKNVVSPPFFPEKELNNRLHQSQGKEALFRLVEKEFPDKSLGAASSTSHAKDVKIQETIRKLNRFKPTGETKVQKRNSITEPYYGKFGIMKKDKPKSITSKGVSLETKHFDDPNTIISGEKFAKFGKIKVKRKTDDVGSKVIEFKRKRNMGNRSLKDIFANAGKPPNAASTIKVVKLMRDPVDNSKDKVEATSNSTAQEQEQVSPKLPVMNSTPGKRKNGQAIPSSLERTPQLKKVKVTRSHSSPSSSSSMSLESSLDSSSSDDSDDDSDSRNVQVKKINFKTSHGPAGNSNGKPMLDVDDNEINTKKYQTPKYVESDEDDQ</sequence>
<proteinExistence type="evidence at protein level"/>
<reference key="1">
    <citation type="journal article" date="1992" name="Yeast">
        <title>DNA sequencing and analysis of a 24.7 kb segment encompassing centromere CEN11 of Saccharomyces cerevisiae reveals nine previously unknown open reading frames.</title>
        <authorList>
            <person name="Duesterhoeft A."/>
            <person name="Philippsen P."/>
        </authorList>
    </citation>
    <scope>NUCLEOTIDE SEQUENCE [GENOMIC DNA]</scope>
    <source>
        <strain>ATCC 204508 / S288c</strain>
    </source>
</reference>
<reference key="2">
    <citation type="journal article" date="1994" name="Nature">
        <title>Complete DNA sequence of yeast chromosome XI.</title>
        <authorList>
            <person name="Dujon B."/>
            <person name="Alexandraki D."/>
            <person name="Andre B."/>
            <person name="Ansorge W."/>
            <person name="Baladron V."/>
            <person name="Ballesta J.P.G."/>
            <person name="Banrevi A."/>
            <person name="Bolle P.-A."/>
            <person name="Bolotin-Fukuhara M."/>
            <person name="Bossier P."/>
            <person name="Bou G."/>
            <person name="Boyer J."/>
            <person name="Buitrago M.J."/>
            <person name="Cheret G."/>
            <person name="Colleaux L."/>
            <person name="Daignan-Fornier B."/>
            <person name="del Rey F."/>
            <person name="Dion C."/>
            <person name="Domdey H."/>
            <person name="Duesterhoeft A."/>
            <person name="Duesterhus S."/>
            <person name="Entian K.-D."/>
            <person name="Erfle H."/>
            <person name="Esteban P.F."/>
            <person name="Feldmann H."/>
            <person name="Fernandes L."/>
            <person name="Fobo G.M."/>
            <person name="Fritz C."/>
            <person name="Fukuhara H."/>
            <person name="Gabel C."/>
            <person name="Gaillon L."/>
            <person name="Garcia-Cantalejo J.M."/>
            <person name="Garcia-Ramirez J.J."/>
            <person name="Gent M.E."/>
            <person name="Ghazvini M."/>
            <person name="Goffeau A."/>
            <person name="Gonzalez A."/>
            <person name="Grothues D."/>
            <person name="Guerreiro P."/>
            <person name="Hegemann J.H."/>
            <person name="Hewitt N."/>
            <person name="Hilger F."/>
            <person name="Hollenberg C.P."/>
            <person name="Horaitis O."/>
            <person name="Indge K.J."/>
            <person name="Jacquier A."/>
            <person name="James C.M."/>
            <person name="Jauniaux J.-C."/>
            <person name="Jimenez A."/>
            <person name="Keuchel H."/>
            <person name="Kirchrath L."/>
            <person name="Kleine K."/>
            <person name="Koetter P."/>
            <person name="Legrain P."/>
            <person name="Liebl S."/>
            <person name="Louis E.J."/>
            <person name="Maia e Silva A."/>
            <person name="Marck C."/>
            <person name="Monnier A.-L."/>
            <person name="Moestl D."/>
            <person name="Mueller S."/>
            <person name="Obermaier B."/>
            <person name="Oliver S.G."/>
            <person name="Pallier C."/>
            <person name="Pascolo S."/>
            <person name="Pfeiffer F."/>
            <person name="Philippsen P."/>
            <person name="Planta R.J."/>
            <person name="Pohl F.M."/>
            <person name="Pohl T.M."/>
            <person name="Poehlmann R."/>
            <person name="Portetelle D."/>
            <person name="Purnelle B."/>
            <person name="Puzos V."/>
            <person name="Ramezani Rad M."/>
            <person name="Rasmussen S.W."/>
            <person name="Remacha M.A."/>
            <person name="Revuelta J.L."/>
            <person name="Richard G.-F."/>
            <person name="Rieger M."/>
            <person name="Rodrigues-Pousada C."/>
            <person name="Rose M."/>
            <person name="Rupp T."/>
            <person name="Santos M.A."/>
            <person name="Schwager C."/>
            <person name="Sensen C."/>
            <person name="Skala J."/>
            <person name="Soares H."/>
            <person name="Sor F."/>
            <person name="Stegemann J."/>
            <person name="Tettelin H."/>
            <person name="Thierry A."/>
            <person name="Tzermia M."/>
            <person name="Urrestarazu L.A."/>
            <person name="van Dyck L."/>
            <person name="van Vliet-Reedijk J.C."/>
            <person name="Valens M."/>
            <person name="Vandenbol M."/>
            <person name="Vilela C."/>
            <person name="Vissers S."/>
            <person name="von Wettstein D."/>
            <person name="Voss H."/>
            <person name="Wiemann S."/>
            <person name="Xu G."/>
            <person name="Zimmermann J."/>
            <person name="Haasemann M."/>
            <person name="Becker I."/>
            <person name="Mewes H.-W."/>
        </authorList>
    </citation>
    <scope>NUCLEOTIDE SEQUENCE [LARGE SCALE GENOMIC DNA]</scope>
    <source>
        <strain>ATCC 204508 / S288c</strain>
    </source>
</reference>
<reference key="3">
    <citation type="journal article" date="2014" name="G3 (Bethesda)">
        <title>The reference genome sequence of Saccharomyces cerevisiae: Then and now.</title>
        <authorList>
            <person name="Engel S.R."/>
            <person name="Dietrich F.S."/>
            <person name="Fisk D.G."/>
            <person name="Binkley G."/>
            <person name="Balakrishnan R."/>
            <person name="Costanzo M.C."/>
            <person name="Dwight S.S."/>
            <person name="Hitz B.C."/>
            <person name="Karra K."/>
            <person name="Nash R.S."/>
            <person name="Weng S."/>
            <person name="Wong E.D."/>
            <person name="Lloyd P."/>
            <person name="Skrzypek M.S."/>
            <person name="Miyasato S.R."/>
            <person name="Simison M."/>
            <person name="Cherry J.M."/>
        </authorList>
    </citation>
    <scope>GENOME REANNOTATION</scope>
    <source>
        <strain>ATCC 204508 / S288c</strain>
    </source>
</reference>
<reference key="4">
    <citation type="journal article" date="1999" name="Yeast">
        <title>Identification and characterization of the genes for two topoisomerase I-interacting proteins from Saccharomyces cerevisiae.</title>
        <authorList>
            <person name="Park H."/>
            <person name="Sternglanz R."/>
        </authorList>
    </citation>
    <scope>IDENTIFICATION</scope>
    <scope>INTERACTION WITH HPR1</scope>
</reference>
<reference key="5">
    <citation type="journal article" date="2003" name="Nature">
        <title>Global analysis of protein expression in yeast.</title>
        <authorList>
            <person name="Ghaemmaghami S."/>
            <person name="Huh W.-K."/>
            <person name="Bower K."/>
            <person name="Howson R.W."/>
            <person name="Belle A."/>
            <person name="Dephoure N."/>
            <person name="O'Shea E.K."/>
            <person name="Weissman J.S."/>
        </authorList>
    </citation>
    <scope>LEVEL OF PROTEIN EXPRESSION [LARGE SCALE ANALYSIS]</scope>
</reference>
<reference key="6">
    <citation type="journal article" date="2009" name="Science">
        <title>Global analysis of Cdk1 substrate phosphorylation sites provides insights into evolution.</title>
        <authorList>
            <person name="Holt L.J."/>
            <person name="Tuch B.B."/>
            <person name="Villen J."/>
            <person name="Johnson A.D."/>
            <person name="Gygi S.P."/>
            <person name="Morgan D.O."/>
        </authorList>
    </citation>
    <scope>PHOSPHORYLATION [LARGE SCALE ANALYSIS] AT SER-397 AND THR-405</scope>
    <scope>IDENTIFICATION BY MASS SPECTROMETRY [LARGE SCALE ANALYSIS]</scope>
</reference>
<protein>
    <recommendedName>
        <fullName>Topoisomerase 1-associated factor 2</fullName>
    </recommendedName>
</protein>
<organism>
    <name type="scientific">Saccharomyces cerevisiae (strain ATCC 204508 / S288c)</name>
    <name type="common">Baker's yeast</name>
    <dbReference type="NCBI Taxonomy" id="559292"/>
    <lineage>
        <taxon>Eukaryota</taxon>
        <taxon>Fungi</taxon>
        <taxon>Dikarya</taxon>
        <taxon>Ascomycota</taxon>
        <taxon>Saccharomycotina</taxon>
        <taxon>Saccharomycetes</taxon>
        <taxon>Saccharomycetales</taxon>
        <taxon>Saccharomycetaceae</taxon>
        <taxon>Saccharomyces</taxon>
    </lineage>
</organism>
<evidence type="ECO:0000256" key="1">
    <source>
        <dbReference type="SAM" id="MobiDB-lite"/>
    </source>
</evidence>
<evidence type="ECO:0000269" key="2">
    <source>
    </source>
</evidence>
<evidence type="ECO:0000269" key="3">
    <source>
    </source>
</evidence>
<evidence type="ECO:0000305" key="4"/>
<evidence type="ECO:0007744" key="5">
    <source>
    </source>
</evidence>
<evidence type="ECO:0007829" key="6">
    <source>
        <dbReference type="PDB" id="5HOI"/>
    </source>
</evidence>
<comment type="subunit">
    <text evidence="2">Interacts with HPR1.</text>
</comment>
<comment type="interaction">
    <interactant intactId="EBI-27048">
        <id>Q02208</id>
    </interactant>
    <interactant intactId="EBI-4192">
        <id>Q00684</id>
        <label>CDC14</label>
    </interactant>
    <organismsDiffer>false</organismsDiffer>
    <experiments>9</experiments>
</comment>
<comment type="interaction">
    <interactant intactId="EBI-27048">
        <id>Q02208</id>
    </interactant>
    <interactant intactId="EBI-22001">
        <id>P25651</id>
        <label>CSM1</label>
    </interactant>
    <organismsDiffer>false</organismsDiffer>
    <experiments>4</experiments>
</comment>
<comment type="interaction">
    <interactant intactId="EBI-27048">
        <id>Q02208</id>
    </interactant>
    <interactant intactId="EBI-25953">
        <id>P47035</id>
        <label>NET1</label>
    </interactant>
    <organismsDiffer>false</organismsDiffer>
    <experiments>7</experiments>
</comment>
<comment type="subcellular location">
    <subcellularLocation>
        <location evidence="4">Nucleus</location>
    </subcellularLocation>
</comment>
<comment type="miscellaneous">
    <text evidence="3">Present with 339 molecules/cell in log phase SD medium.</text>
</comment>
<comment type="similarity">
    <text evidence="4">To yeast YJL076w.</text>
</comment>
<keyword id="KW-0002">3D-structure</keyword>
<keyword id="KW-0539">Nucleus</keyword>
<keyword id="KW-0597">Phosphoprotein</keyword>
<keyword id="KW-1185">Reference proteome</keyword>
<dbReference type="EMBL" id="X65124">
    <property type="protein sequence ID" value="CAA46242.1"/>
    <property type="molecule type" value="Genomic_DNA"/>
</dbReference>
<dbReference type="EMBL" id="Z28235">
    <property type="protein sequence ID" value="CAA82080.1"/>
    <property type="molecule type" value="Genomic_DNA"/>
</dbReference>
<dbReference type="EMBL" id="BK006944">
    <property type="protein sequence ID" value="DAA09166.1"/>
    <property type="molecule type" value="Genomic_DNA"/>
</dbReference>
<dbReference type="PIR" id="S25814">
    <property type="entry name" value="S25814"/>
</dbReference>
<dbReference type="RefSeq" id="NP_012935.3">
    <property type="nucleotide sequence ID" value="NM_001179800.3"/>
</dbReference>
<dbReference type="PDB" id="5HOI">
    <property type="method" value="X-ray"/>
    <property type="resolution" value="3.30 A"/>
    <property type="chains" value="D/E/F=497-517"/>
</dbReference>
<dbReference type="PDB" id="5V3N">
    <property type="method" value="X-ray"/>
    <property type="resolution" value="1.30 A"/>
    <property type="chains" value="B=384-398"/>
</dbReference>
<dbReference type="PDBsum" id="5HOI"/>
<dbReference type="PDBsum" id="5V3N"/>
<dbReference type="SMR" id="Q02208"/>
<dbReference type="BioGRID" id="34143">
    <property type="interactions" value="169"/>
</dbReference>
<dbReference type="DIP" id="DIP-3803N"/>
<dbReference type="FunCoup" id="Q02208">
    <property type="interactions" value="340"/>
</dbReference>
<dbReference type="IntAct" id="Q02208">
    <property type="interactions" value="29"/>
</dbReference>
<dbReference type="MINT" id="Q02208"/>
<dbReference type="STRING" id="4932.YKR010C"/>
<dbReference type="GlyGen" id="Q02208">
    <property type="glycosylation" value="1 site"/>
</dbReference>
<dbReference type="iPTMnet" id="Q02208"/>
<dbReference type="PaxDb" id="4932-YKR010C"/>
<dbReference type="PeptideAtlas" id="Q02208"/>
<dbReference type="EnsemblFungi" id="YKR010C_mRNA">
    <property type="protein sequence ID" value="YKR010C"/>
    <property type="gene ID" value="YKR010C"/>
</dbReference>
<dbReference type="GeneID" id="853880"/>
<dbReference type="KEGG" id="sce:YKR010C"/>
<dbReference type="AGR" id="SGD:S000001718"/>
<dbReference type="SGD" id="S000001718">
    <property type="gene designation" value="TOF2"/>
</dbReference>
<dbReference type="VEuPathDB" id="FungiDB:YKR010C"/>
<dbReference type="eggNOG" id="ENOG502QW4V">
    <property type="taxonomic scope" value="Eukaryota"/>
</dbReference>
<dbReference type="GeneTree" id="ENSGT00940000176631"/>
<dbReference type="HOGENOM" id="CLU_362533_0_0_1"/>
<dbReference type="InParanoid" id="Q02208"/>
<dbReference type="OMA" id="TPLMNEI"/>
<dbReference type="OrthoDB" id="6365676at2759"/>
<dbReference type="BioCyc" id="YEAST:G3O-31987-MONOMER"/>
<dbReference type="BioGRID-ORCS" id="853880">
    <property type="hits" value="0 hits in 10 CRISPR screens"/>
</dbReference>
<dbReference type="PRO" id="PR:Q02208"/>
<dbReference type="Proteomes" id="UP000002311">
    <property type="component" value="Chromosome XI"/>
</dbReference>
<dbReference type="RNAct" id="Q02208">
    <property type="molecule type" value="protein"/>
</dbReference>
<dbReference type="GO" id="GO:0005739">
    <property type="term" value="C:mitochondrion"/>
    <property type="evidence" value="ECO:0007005"/>
    <property type="project" value="SGD"/>
</dbReference>
<dbReference type="GO" id="GO:0005730">
    <property type="term" value="C:nucleolus"/>
    <property type="evidence" value="ECO:0000314"/>
    <property type="project" value="SGD"/>
</dbReference>
<dbReference type="GO" id="GO:0019211">
    <property type="term" value="F:phosphatase activator activity"/>
    <property type="evidence" value="ECO:0000314"/>
    <property type="project" value="SGD"/>
</dbReference>
<dbReference type="GO" id="GO:0000182">
    <property type="term" value="F:rDNA binding"/>
    <property type="evidence" value="ECO:0000318"/>
    <property type="project" value="GO_Central"/>
</dbReference>
<dbReference type="GO" id="GO:0007000">
    <property type="term" value="P:nucleolus organization"/>
    <property type="evidence" value="ECO:0000315"/>
    <property type="project" value="SGD"/>
</dbReference>
<dbReference type="GO" id="GO:0034503">
    <property type="term" value="P:protein localization to nucleolar rDNA repeats"/>
    <property type="evidence" value="ECO:0000315"/>
    <property type="project" value="SGD"/>
</dbReference>
<dbReference type="GO" id="GO:0070550">
    <property type="term" value="P:rDNA chromatin condensation"/>
    <property type="evidence" value="ECO:0000315"/>
    <property type="project" value="SGD"/>
</dbReference>
<dbReference type="GO" id="GO:0000183">
    <property type="term" value="P:rDNA heterochromatin formation"/>
    <property type="evidence" value="ECO:0000315"/>
    <property type="project" value="SGD"/>
</dbReference>
<dbReference type="InterPro" id="IPR018844">
    <property type="entry name" value="Dnt1-like_N"/>
</dbReference>
<dbReference type="InterPro" id="IPR043185">
    <property type="entry name" value="Net1/Tof2"/>
</dbReference>
<dbReference type="PANTHER" id="PTHR28196">
    <property type="entry name" value="NUCLEOLAR PROTEIN NET1-RELATED"/>
    <property type="match status" value="1"/>
</dbReference>
<dbReference type="PANTHER" id="PTHR28196:SF1">
    <property type="entry name" value="NUCLEOLAR PROTEIN NET1-RELATED"/>
    <property type="match status" value="1"/>
</dbReference>
<dbReference type="Pfam" id="PF10407">
    <property type="entry name" value="Cytokin_check_N"/>
    <property type="match status" value="1"/>
</dbReference>
<accession>Q02208</accession>
<accession>D6VX76</accession>
<name>TOF2_YEAST</name>
<gene>
    <name type="primary">TOF2</name>
    <name type="ordered locus">YKR010C</name>
    <name type="ORF">YK109</name>
</gene>
<feature type="chain" id="PRO_0000072621" description="Topoisomerase 1-associated factor 2">
    <location>
        <begin position="1"/>
        <end position="771"/>
    </location>
</feature>
<feature type="region of interest" description="Disordered" evidence="1">
    <location>
        <begin position="48"/>
        <end position="69"/>
    </location>
</feature>
<feature type="region of interest" description="Disordered" evidence="1">
    <location>
        <begin position="271"/>
        <end position="330"/>
    </location>
</feature>
<feature type="region of interest" description="Disordered" evidence="1">
    <location>
        <begin position="346"/>
        <end position="367"/>
    </location>
</feature>
<feature type="region of interest" description="Disordered" evidence="1">
    <location>
        <begin position="633"/>
        <end position="771"/>
    </location>
</feature>
<feature type="compositionally biased region" description="Low complexity" evidence="1">
    <location>
        <begin position="51"/>
        <end position="69"/>
    </location>
</feature>
<feature type="compositionally biased region" description="Polar residues" evidence="1">
    <location>
        <begin position="275"/>
        <end position="294"/>
    </location>
</feature>
<feature type="compositionally biased region" description="Basic and acidic residues" evidence="1">
    <location>
        <begin position="295"/>
        <end position="307"/>
    </location>
</feature>
<feature type="compositionally biased region" description="Polar residues" evidence="1">
    <location>
        <begin position="346"/>
        <end position="359"/>
    </location>
</feature>
<feature type="compositionally biased region" description="Polar residues" evidence="1">
    <location>
        <begin position="640"/>
        <end position="652"/>
    </location>
</feature>
<feature type="compositionally biased region" description="Low complexity" evidence="1">
    <location>
        <begin position="690"/>
        <end position="709"/>
    </location>
</feature>
<feature type="modified residue" description="Phosphoserine" evidence="5">
    <location>
        <position position="397"/>
    </location>
</feature>
<feature type="modified residue" description="Phosphothreonine" evidence="5">
    <location>
        <position position="405"/>
    </location>
</feature>
<feature type="helix" evidence="6">
    <location>
        <begin position="503"/>
        <end position="512"/>
    </location>
</feature>